<accession>A1WK91</accession>
<sequence>MRHGHGLRKLNRSSSHRLAMLQNMMNSLIEHEVIKTTLPKAKELRRVIEPMITLAKQDSVANRRLAFNRLRERASVTKLFNVLGPHFRLRPGGYTRILKMGFRVGDNAPMALVELVDRPGVATEENNSASAEQ</sequence>
<dbReference type="EMBL" id="CP000542">
    <property type="protein sequence ID" value="ABM58048.1"/>
    <property type="molecule type" value="Genomic_DNA"/>
</dbReference>
<dbReference type="RefSeq" id="WP_011810051.1">
    <property type="nucleotide sequence ID" value="NC_008786.1"/>
</dbReference>
<dbReference type="SMR" id="A1WK91"/>
<dbReference type="STRING" id="391735.Veis_2300"/>
<dbReference type="GeneID" id="76460864"/>
<dbReference type="KEGG" id="vei:Veis_2300"/>
<dbReference type="eggNOG" id="COG0203">
    <property type="taxonomic scope" value="Bacteria"/>
</dbReference>
<dbReference type="HOGENOM" id="CLU_074407_2_0_4"/>
<dbReference type="OrthoDB" id="9809073at2"/>
<dbReference type="Proteomes" id="UP000000374">
    <property type="component" value="Chromosome"/>
</dbReference>
<dbReference type="GO" id="GO:0022625">
    <property type="term" value="C:cytosolic large ribosomal subunit"/>
    <property type="evidence" value="ECO:0007669"/>
    <property type="project" value="TreeGrafter"/>
</dbReference>
<dbReference type="GO" id="GO:0003735">
    <property type="term" value="F:structural constituent of ribosome"/>
    <property type="evidence" value="ECO:0007669"/>
    <property type="project" value="InterPro"/>
</dbReference>
<dbReference type="GO" id="GO:0006412">
    <property type="term" value="P:translation"/>
    <property type="evidence" value="ECO:0007669"/>
    <property type="project" value="UniProtKB-UniRule"/>
</dbReference>
<dbReference type="FunFam" id="3.90.1030.10:FF:000001">
    <property type="entry name" value="50S ribosomal protein L17"/>
    <property type="match status" value="1"/>
</dbReference>
<dbReference type="Gene3D" id="3.90.1030.10">
    <property type="entry name" value="Ribosomal protein L17"/>
    <property type="match status" value="1"/>
</dbReference>
<dbReference type="HAMAP" id="MF_01368">
    <property type="entry name" value="Ribosomal_bL17"/>
    <property type="match status" value="1"/>
</dbReference>
<dbReference type="InterPro" id="IPR000456">
    <property type="entry name" value="Ribosomal_bL17"/>
</dbReference>
<dbReference type="InterPro" id="IPR047859">
    <property type="entry name" value="Ribosomal_bL17_CS"/>
</dbReference>
<dbReference type="InterPro" id="IPR036373">
    <property type="entry name" value="Ribosomal_bL17_sf"/>
</dbReference>
<dbReference type="NCBIfam" id="TIGR00059">
    <property type="entry name" value="L17"/>
    <property type="match status" value="1"/>
</dbReference>
<dbReference type="PANTHER" id="PTHR14413:SF16">
    <property type="entry name" value="LARGE RIBOSOMAL SUBUNIT PROTEIN BL17M"/>
    <property type="match status" value="1"/>
</dbReference>
<dbReference type="PANTHER" id="PTHR14413">
    <property type="entry name" value="RIBOSOMAL PROTEIN L17"/>
    <property type="match status" value="1"/>
</dbReference>
<dbReference type="Pfam" id="PF01196">
    <property type="entry name" value="Ribosomal_L17"/>
    <property type="match status" value="1"/>
</dbReference>
<dbReference type="SUPFAM" id="SSF64263">
    <property type="entry name" value="Prokaryotic ribosomal protein L17"/>
    <property type="match status" value="1"/>
</dbReference>
<dbReference type="PROSITE" id="PS01167">
    <property type="entry name" value="RIBOSOMAL_L17"/>
    <property type="match status" value="1"/>
</dbReference>
<name>RL17_VEREI</name>
<proteinExistence type="inferred from homology"/>
<keyword id="KW-1185">Reference proteome</keyword>
<keyword id="KW-0687">Ribonucleoprotein</keyword>
<keyword id="KW-0689">Ribosomal protein</keyword>
<reference key="1">
    <citation type="submission" date="2006-12" db="EMBL/GenBank/DDBJ databases">
        <title>Complete sequence of chromosome 1 of Verminephrobacter eiseniae EF01-2.</title>
        <authorList>
            <person name="Copeland A."/>
            <person name="Lucas S."/>
            <person name="Lapidus A."/>
            <person name="Barry K."/>
            <person name="Detter J.C."/>
            <person name="Glavina del Rio T."/>
            <person name="Dalin E."/>
            <person name="Tice H."/>
            <person name="Pitluck S."/>
            <person name="Chertkov O."/>
            <person name="Brettin T."/>
            <person name="Bruce D."/>
            <person name="Han C."/>
            <person name="Tapia R."/>
            <person name="Gilna P."/>
            <person name="Schmutz J."/>
            <person name="Larimer F."/>
            <person name="Land M."/>
            <person name="Hauser L."/>
            <person name="Kyrpides N."/>
            <person name="Kim E."/>
            <person name="Stahl D."/>
            <person name="Richardson P."/>
        </authorList>
    </citation>
    <scope>NUCLEOTIDE SEQUENCE [LARGE SCALE GENOMIC DNA]</scope>
    <source>
        <strain>EF01-2</strain>
    </source>
</reference>
<comment type="subunit">
    <text evidence="1">Part of the 50S ribosomal subunit. Contacts protein L32.</text>
</comment>
<comment type="similarity">
    <text evidence="1">Belongs to the bacterial ribosomal protein bL17 family.</text>
</comment>
<protein>
    <recommendedName>
        <fullName evidence="1">Large ribosomal subunit protein bL17</fullName>
    </recommendedName>
    <alternativeName>
        <fullName evidence="2">50S ribosomal protein L17</fullName>
    </alternativeName>
</protein>
<gene>
    <name evidence="1" type="primary">rplQ</name>
    <name type="ordered locus">Veis_2300</name>
</gene>
<organism>
    <name type="scientific">Verminephrobacter eiseniae (strain EF01-2)</name>
    <dbReference type="NCBI Taxonomy" id="391735"/>
    <lineage>
        <taxon>Bacteria</taxon>
        <taxon>Pseudomonadati</taxon>
        <taxon>Pseudomonadota</taxon>
        <taxon>Betaproteobacteria</taxon>
        <taxon>Burkholderiales</taxon>
        <taxon>Comamonadaceae</taxon>
        <taxon>Verminephrobacter</taxon>
    </lineage>
</organism>
<feature type="chain" id="PRO_1000055988" description="Large ribosomal subunit protein bL17">
    <location>
        <begin position="1"/>
        <end position="133"/>
    </location>
</feature>
<evidence type="ECO:0000255" key="1">
    <source>
        <dbReference type="HAMAP-Rule" id="MF_01368"/>
    </source>
</evidence>
<evidence type="ECO:0000305" key="2"/>